<gene>
    <name evidence="1" type="primary">kdsA</name>
    <name type="ordered locus">ABBFA_001556</name>
</gene>
<protein>
    <recommendedName>
        <fullName evidence="1">2-dehydro-3-deoxyphosphooctonate aldolase</fullName>
        <ecNumber evidence="1">2.5.1.55</ecNumber>
    </recommendedName>
    <alternativeName>
        <fullName evidence="1">3-deoxy-D-manno-octulosonic acid 8-phosphate synthase</fullName>
    </alternativeName>
    <alternativeName>
        <fullName evidence="1">KDO-8-phosphate synthase</fullName>
        <shortName evidence="1">KDO 8-P synthase</shortName>
        <shortName evidence="1">KDOPS</shortName>
    </alternativeName>
    <alternativeName>
        <fullName evidence="1">Phospho-2-dehydro-3-deoxyoctonate aldolase</fullName>
    </alternativeName>
</protein>
<organism>
    <name type="scientific">Acinetobacter baumannii (strain AB307-0294)</name>
    <dbReference type="NCBI Taxonomy" id="557600"/>
    <lineage>
        <taxon>Bacteria</taxon>
        <taxon>Pseudomonadati</taxon>
        <taxon>Pseudomonadota</taxon>
        <taxon>Gammaproteobacteria</taxon>
        <taxon>Moraxellales</taxon>
        <taxon>Moraxellaceae</taxon>
        <taxon>Acinetobacter</taxon>
        <taxon>Acinetobacter calcoaceticus/baumannii complex</taxon>
    </lineage>
</organism>
<accession>B7H226</accession>
<feature type="chain" id="PRO_1000116872" description="2-dehydro-3-deoxyphosphooctonate aldolase">
    <location>
        <begin position="1"/>
        <end position="285"/>
    </location>
</feature>
<feature type="strand" evidence="2">
    <location>
        <begin position="8"/>
        <end position="12"/>
    </location>
</feature>
<feature type="strand" evidence="2">
    <location>
        <begin position="15"/>
        <end position="17"/>
    </location>
</feature>
<feature type="strand" evidence="2">
    <location>
        <begin position="24"/>
        <end position="31"/>
    </location>
</feature>
<feature type="helix" evidence="2">
    <location>
        <begin position="35"/>
        <end position="52"/>
    </location>
</feature>
<feature type="strand" evidence="2">
    <location>
        <begin position="56"/>
        <end position="62"/>
    </location>
</feature>
<feature type="helix" evidence="2">
    <location>
        <begin position="78"/>
        <end position="92"/>
    </location>
</feature>
<feature type="strand" evidence="2">
    <location>
        <begin position="96"/>
        <end position="99"/>
    </location>
</feature>
<feature type="helix" evidence="2">
    <location>
        <begin position="103"/>
        <end position="105"/>
    </location>
</feature>
<feature type="helix" evidence="2">
    <location>
        <begin position="106"/>
        <end position="112"/>
    </location>
</feature>
<feature type="strand" evidence="2">
    <location>
        <begin position="114"/>
        <end position="118"/>
    </location>
</feature>
<feature type="helix" evidence="2">
    <location>
        <begin position="120"/>
        <end position="122"/>
    </location>
</feature>
<feature type="helix" evidence="2">
    <location>
        <begin position="126"/>
        <end position="134"/>
    </location>
</feature>
<feature type="strand" evidence="2">
    <location>
        <begin position="137"/>
        <end position="142"/>
    </location>
</feature>
<feature type="helix" evidence="2">
    <location>
        <begin position="149"/>
        <end position="151"/>
    </location>
</feature>
<feature type="helix" evidence="2">
    <location>
        <begin position="152"/>
        <end position="161"/>
    </location>
</feature>
<feature type="strand" evidence="2">
    <location>
        <begin position="167"/>
        <end position="171"/>
    </location>
</feature>
<feature type="strand" evidence="2">
    <location>
        <begin position="177"/>
        <end position="179"/>
    </location>
</feature>
<feature type="helix" evidence="2">
    <location>
        <begin position="186"/>
        <end position="192"/>
    </location>
</feature>
<feature type="turn" evidence="2">
    <location>
        <begin position="193"/>
        <end position="195"/>
    </location>
</feature>
<feature type="strand" evidence="2">
    <location>
        <begin position="198"/>
        <end position="201"/>
    </location>
</feature>
<feature type="helix" evidence="2">
    <location>
        <begin position="202"/>
        <end position="205"/>
    </location>
</feature>
<feature type="helix" evidence="2">
    <location>
        <begin position="219"/>
        <end position="222"/>
    </location>
</feature>
<feature type="helix" evidence="2">
    <location>
        <begin position="223"/>
        <end position="231"/>
    </location>
</feature>
<feature type="strand" evidence="2">
    <location>
        <begin position="236"/>
        <end position="245"/>
    </location>
</feature>
<feature type="helix" evidence="2">
    <location>
        <begin position="246"/>
        <end position="248"/>
    </location>
</feature>
<feature type="helix" evidence="2">
    <location>
        <begin position="253"/>
        <end position="255"/>
    </location>
</feature>
<feature type="helix" evidence="2">
    <location>
        <begin position="259"/>
        <end position="261"/>
    </location>
</feature>
<feature type="helix" evidence="2">
    <location>
        <begin position="262"/>
        <end position="277"/>
    </location>
</feature>
<dbReference type="EC" id="2.5.1.55" evidence="1"/>
<dbReference type="EMBL" id="CP001172">
    <property type="protein sequence ID" value="ACJ58772.1"/>
    <property type="molecule type" value="Genomic_DNA"/>
</dbReference>
<dbReference type="RefSeq" id="WP_000080538.1">
    <property type="nucleotide sequence ID" value="NZ_CP001172.1"/>
</dbReference>
<dbReference type="PDB" id="6BNG">
    <property type="method" value="X-ray"/>
    <property type="resolution" value="2.20 A"/>
    <property type="chains" value="A/B=5-285"/>
</dbReference>
<dbReference type="PDBsum" id="6BNG"/>
<dbReference type="SMR" id="B7H226"/>
<dbReference type="GeneID" id="92894150"/>
<dbReference type="HOGENOM" id="CLU_036666_0_0_6"/>
<dbReference type="UniPathway" id="UPA00030"/>
<dbReference type="UniPathway" id="UPA00357">
    <property type="reaction ID" value="UER00474"/>
</dbReference>
<dbReference type="Proteomes" id="UP000006924">
    <property type="component" value="Chromosome"/>
</dbReference>
<dbReference type="GO" id="GO:0005737">
    <property type="term" value="C:cytoplasm"/>
    <property type="evidence" value="ECO:0007669"/>
    <property type="project" value="UniProtKB-SubCell"/>
</dbReference>
<dbReference type="GO" id="GO:0008676">
    <property type="term" value="F:3-deoxy-8-phosphooctulonate synthase activity"/>
    <property type="evidence" value="ECO:0007669"/>
    <property type="project" value="UniProtKB-UniRule"/>
</dbReference>
<dbReference type="GO" id="GO:0019294">
    <property type="term" value="P:keto-3-deoxy-D-manno-octulosonic acid biosynthetic process"/>
    <property type="evidence" value="ECO:0007669"/>
    <property type="project" value="UniProtKB-UniRule"/>
</dbReference>
<dbReference type="Gene3D" id="3.20.20.70">
    <property type="entry name" value="Aldolase class I"/>
    <property type="match status" value="1"/>
</dbReference>
<dbReference type="HAMAP" id="MF_00056">
    <property type="entry name" value="KDO8P_synth"/>
    <property type="match status" value="1"/>
</dbReference>
<dbReference type="InterPro" id="IPR013785">
    <property type="entry name" value="Aldolase_TIM"/>
</dbReference>
<dbReference type="InterPro" id="IPR006218">
    <property type="entry name" value="DAHP1/KDSA"/>
</dbReference>
<dbReference type="InterPro" id="IPR006269">
    <property type="entry name" value="KDO8P_synthase"/>
</dbReference>
<dbReference type="NCBIfam" id="TIGR01362">
    <property type="entry name" value="KDO8P_synth"/>
    <property type="match status" value="1"/>
</dbReference>
<dbReference type="NCBIfam" id="NF003543">
    <property type="entry name" value="PRK05198.1"/>
    <property type="match status" value="1"/>
</dbReference>
<dbReference type="PANTHER" id="PTHR21057">
    <property type="entry name" value="PHOSPHO-2-DEHYDRO-3-DEOXYHEPTONATE ALDOLASE"/>
    <property type="match status" value="1"/>
</dbReference>
<dbReference type="Pfam" id="PF00793">
    <property type="entry name" value="DAHP_synth_1"/>
    <property type="match status" value="1"/>
</dbReference>
<dbReference type="SUPFAM" id="SSF51569">
    <property type="entry name" value="Aldolase"/>
    <property type="match status" value="1"/>
</dbReference>
<sequence length="285" mass="31550">MSQLKPQEVVRLGDIQMANHLPFVLFGGMNVLESKDLAFEIAETYIDICKRLDIPYVFKASFDKANRSSLHSFRGPGLEKGIEWLGDIKKHFNVPIITDVHEPYQAAPVAEVADIIQLPAFLSRQTDLVEAMAKTQAIINIKKAQFLAPHEMRHILHKCLEAGNDKLILCERGSAFGYNNLVVDMLGFDIMKEMNVPVFFDVTHALQTPGGRSDSAGGRRAQITTLARAGMATGLAGLFLESHPDPDKAKCDGPSALRLSQLEPFLAQLKELDTLVKGFKKLDTH</sequence>
<keyword id="KW-0002">3D-structure</keyword>
<keyword id="KW-0963">Cytoplasm</keyword>
<keyword id="KW-0448">Lipopolysaccharide biosynthesis</keyword>
<keyword id="KW-0808">Transferase</keyword>
<name>KDSA_ACIB3</name>
<reference key="1">
    <citation type="journal article" date="2008" name="J. Bacteriol.">
        <title>Comparative genome sequence analysis of multidrug-resistant Acinetobacter baumannii.</title>
        <authorList>
            <person name="Adams M.D."/>
            <person name="Goglin K."/>
            <person name="Molyneaux N."/>
            <person name="Hujer K.M."/>
            <person name="Lavender H."/>
            <person name="Jamison J.J."/>
            <person name="MacDonald I.J."/>
            <person name="Martin K.M."/>
            <person name="Russo T."/>
            <person name="Campagnari A.A."/>
            <person name="Hujer A.M."/>
            <person name="Bonomo R.A."/>
            <person name="Gill S.R."/>
        </authorList>
    </citation>
    <scope>NUCLEOTIDE SEQUENCE [LARGE SCALE GENOMIC DNA]</scope>
    <source>
        <strain>AB307-0294</strain>
    </source>
</reference>
<evidence type="ECO:0000255" key="1">
    <source>
        <dbReference type="HAMAP-Rule" id="MF_00056"/>
    </source>
</evidence>
<evidence type="ECO:0007829" key="2">
    <source>
        <dbReference type="PDB" id="6BNG"/>
    </source>
</evidence>
<proteinExistence type="evidence at protein level"/>
<comment type="catalytic activity">
    <reaction evidence="1">
        <text>D-arabinose 5-phosphate + phosphoenolpyruvate + H2O = 3-deoxy-alpha-D-manno-2-octulosonate-8-phosphate + phosphate</text>
        <dbReference type="Rhea" id="RHEA:14053"/>
        <dbReference type="ChEBI" id="CHEBI:15377"/>
        <dbReference type="ChEBI" id="CHEBI:43474"/>
        <dbReference type="ChEBI" id="CHEBI:57693"/>
        <dbReference type="ChEBI" id="CHEBI:58702"/>
        <dbReference type="ChEBI" id="CHEBI:85985"/>
        <dbReference type="EC" id="2.5.1.55"/>
    </reaction>
</comment>
<comment type="pathway">
    <text evidence="1">Carbohydrate biosynthesis; 3-deoxy-D-manno-octulosonate biosynthesis; 3-deoxy-D-manno-octulosonate from D-ribulose 5-phosphate: step 2/3.</text>
</comment>
<comment type="pathway">
    <text evidence="1">Bacterial outer membrane biogenesis; lipopolysaccharide biosynthesis.</text>
</comment>
<comment type="subcellular location">
    <subcellularLocation>
        <location evidence="1">Cytoplasm</location>
    </subcellularLocation>
</comment>
<comment type="similarity">
    <text evidence="1">Belongs to the KdsA family.</text>
</comment>